<comment type="subcellular location">
    <subcellularLocation>
        <location evidence="2">Membrane</location>
        <topology evidence="2">Multi-pass membrane protein</topology>
    </subcellularLocation>
</comment>
<comment type="similarity">
    <text evidence="4">Belongs to the ABC transporter superfamily. ABCB family. Multidrug resistance exporter (TC 3.A.1.201) subfamily.</text>
</comment>
<accession>Q54W24</accession>
<accession>Q8T9W3</accession>
<organism>
    <name type="scientific">Dictyostelium discoideum</name>
    <name type="common">Social amoeba</name>
    <dbReference type="NCBI Taxonomy" id="44689"/>
    <lineage>
        <taxon>Eukaryota</taxon>
        <taxon>Amoebozoa</taxon>
        <taxon>Evosea</taxon>
        <taxon>Eumycetozoa</taxon>
        <taxon>Dictyostelia</taxon>
        <taxon>Dictyosteliales</taxon>
        <taxon>Dictyosteliaceae</taxon>
        <taxon>Dictyostelium</taxon>
    </lineage>
</organism>
<dbReference type="EMBL" id="AF466307">
    <property type="protein sequence ID" value="AAL74251.2"/>
    <property type="molecule type" value="Genomic_DNA"/>
</dbReference>
<dbReference type="EMBL" id="AAFI02000035">
    <property type="protein sequence ID" value="EAL67429.1"/>
    <property type="molecule type" value="Genomic_DNA"/>
</dbReference>
<dbReference type="RefSeq" id="XP_641426.1">
    <property type="nucleotide sequence ID" value="XM_636334.1"/>
</dbReference>
<dbReference type="SMR" id="Q54W24"/>
<dbReference type="FunCoup" id="Q54W24">
    <property type="interactions" value="64"/>
</dbReference>
<dbReference type="STRING" id="44689.Q54W24"/>
<dbReference type="PaxDb" id="44689-DDB0208540"/>
<dbReference type="EnsemblProtists" id="EAL67429">
    <property type="protein sequence ID" value="EAL67429"/>
    <property type="gene ID" value="DDB_G0279915"/>
</dbReference>
<dbReference type="GeneID" id="8622310"/>
<dbReference type="KEGG" id="ddi:DDB_G0279915"/>
<dbReference type="dictyBase" id="DDB_G0279915">
    <property type="gene designation" value="abcB4"/>
</dbReference>
<dbReference type="VEuPathDB" id="AmoebaDB:DDB_G0279915"/>
<dbReference type="eggNOG" id="KOG0058">
    <property type="taxonomic scope" value="Eukaryota"/>
</dbReference>
<dbReference type="HOGENOM" id="CLU_000604_84_3_1"/>
<dbReference type="InParanoid" id="Q54W24"/>
<dbReference type="OMA" id="HDRWASG"/>
<dbReference type="PhylomeDB" id="Q54W24"/>
<dbReference type="PRO" id="PR:Q54W24"/>
<dbReference type="Proteomes" id="UP000002195">
    <property type="component" value="Chromosome 3"/>
</dbReference>
<dbReference type="GO" id="GO:0043190">
    <property type="term" value="C:ATP-binding cassette (ABC) transporter complex"/>
    <property type="evidence" value="ECO:0000317"/>
    <property type="project" value="dictyBase"/>
</dbReference>
<dbReference type="GO" id="GO:0005743">
    <property type="term" value="C:mitochondrial inner membrane"/>
    <property type="evidence" value="ECO:0000318"/>
    <property type="project" value="GO_Central"/>
</dbReference>
<dbReference type="GO" id="GO:0005739">
    <property type="term" value="C:mitochondrion"/>
    <property type="evidence" value="ECO:0000317"/>
    <property type="project" value="dictyBase"/>
</dbReference>
<dbReference type="GO" id="GO:0005886">
    <property type="term" value="C:plasma membrane"/>
    <property type="evidence" value="ECO:0000314"/>
    <property type="project" value="dictyBase"/>
</dbReference>
<dbReference type="GO" id="GO:0015421">
    <property type="term" value="F:ABC-type oligopeptide transporter activity"/>
    <property type="evidence" value="ECO:0000318"/>
    <property type="project" value="GO_Central"/>
</dbReference>
<dbReference type="GO" id="GO:0005524">
    <property type="term" value="F:ATP binding"/>
    <property type="evidence" value="ECO:0007669"/>
    <property type="project" value="UniProtKB-KW"/>
</dbReference>
<dbReference type="GO" id="GO:0016887">
    <property type="term" value="F:ATP hydrolysis activity"/>
    <property type="evidence" value="ECO:0007669"/>
    <property type="project" value="InterPro"/>
</dbReference>
<dbReference type="GO" id="GO:0042626">
    <property type="term" value="F:ATPase-coupled transmembrane transporter activity"/>
    <property type="evidence" value="ECO:0000317"/>
    <property type="project" value="dictyBase"/>
</dbReference>
<dbReference type="GO" id="GO:0090374">
    <property type="term" value="P:oligopeptide export from mitochondrion"/>
    <property type="evidence" value="ECO:0000318"/>
    <property type="project" value="GO_Central"/>
</dbReference>
<dbReference type="GO" id="GO:0031288">
    <property type="term" value="P:sorocarp morphogenesis"/>
    <property type="evidence" value="ECO:0000315"/>
    <property type="project" value="dictyBase"/>
</dbReference>
<dbReference type="CDD" id="cd18574">
    <property type="entry name" value="ABC_6TM_ABCB8_like"/>
    <property type="match status" value="1"/>
</dbReference>
<dbReference type="CDD" id="cd03249">
    <property type="entry name" value="ABC_MTABC3_MDL1_MDL2"/>
    <property type="match status" value="1"/>
</dbReference>
<dbReference type="FunFam" id="1.20.1560.10:FF:000215">
    <property type="entry name" value="ABC transporter B family member 4"/>
    <property type="match status" value="1"/>
</dbReference>
<dbReference type="FunFam" id="3.40.50.300:FF:000205">
    <property type="entry name" value="ABC transporter B family member 4"/>
    <property type="match status" value="1"/>
</dbReference>
<dbReference type="Gene3D" id="1.20.1560.10">
    <property type="entry name" value="ABC transporter type 1, transmembrane domain"/>
    <property type="match status" value="1"/>
</dbReference>
<dbReference type="Gene3D" id="3.40.50.300">
    <property type="entry name" value="P-loop containing nucleotide triphosphate hydrolases"/>
    <property type="match status" value="1"/>
</dbReference>
<dbReference type="InterPro" id="IPR003593">
    <property type="entry name" value="AAA+_ATPase"/>
</dbReference>
<dbReference type="InterPro" id="IPR011527">
    <property type="entry name" value="ABC1_TM_dom"/>
</dbReference>
<dbReference type="InterPro" id="IPR036640">
    <property type="entry name" value="ABC1_TM_sf"/>
</dbReference>
<dbReference type="InterPro" id="IPR003439">
    <property type="entry name" value="ABC_transporter-like_ATP-bd"/>
</dbReference>
<dbReference type="InterPro" id="IPR017871">
    <property type="entry name" value="ABC_transporter-like_CS"/>
</dbReference>
<dbReference type="InterPro" id="IPR027417">
    <property type="entry name" value="P-loop_NTPase"/>
</dbReference>
<dbReference type="InterPro" id="IPR039421">
    <property type="entry name" value="Type_1_exporter"/>
</dbReference>
<dbReference type="PANTHER" id="PTHR43394:SF1">
    <property type="entry name" value="ATP-BINDING CASSETTE SUB-FAMILY B MEMBER 10, MITOCHONDRIAL"/>
    <property type="match status" value="1"/>
</dbReference>
<dbReference type="PANTHER" id="PTHR43394">
    <property type="entry name" value="ATP-DEPENDENT PERMEASE MDL1, MITOCHONDRIAL"/>
    <property type="match status" value="1"/>
</dbReference>
<dbReference type="Pfam" id="PF00664">
    <property type="entry name" value="ABC_membrane"/>
    <property type="match status" value="1"/>
</dbReference>
<dbReference type="Pfam" id="PF00005">
    <property type="entry name" value="ABC_tran"/>
    <property type="match status" value="1"/>
</dbReference>
<dbReference type="SMART" id="SM00382">
    <property type="entry name" value="AAA"/>
    <property type="match status" value="1"/>
</dbReference>
<dbReference type="SUPFAM" id="SSF90123">
    <property type="entry name" value="ABC transporter transmembrane region"/>
    <property type="match status" value="1"/>
</dbReference>
<dbReference type="SUPFAM" id="SSF52540">
    <property type="entry name" value="P-loop containing nucleoside triphosphate hydrolases"/>
    <property type="match status" value="1"/>
</dbReference>
<dbReference type="PROSITE" id="PS50929">
    <property type="entry name" value="ABC_TM1F"/>
    <property type="match status" value="1"/>
</dbReference>
<dbReference type="PROSITE" id="PS00211">
    <property type="entry name" value="ABC_TRANSPORTER_1"/>
    <property type="match status" value="1"/>
</dbReference>
<dbReference type="PROSITE" id="PS50893">
    <property type="entry name" value="ABC_TRANSPORTER_2"/>
    <property type="match status" value="1"/>
</dbReference>
<keyword id="KW-0067">ATP-binding</keyword>
<keyword id="KW-0472">Membrane</keyword>
<keyword id="KW-0547">Nucleotide-binding</keyword>
<keyword id="KW-1185">Reference proteome</keyword>
<keyword id="KW-0812">Transmembrane</keyword>
<keyword id="KW-1133">Transmembrane helix</keyword>
<keyword id="KW-0813">Transport</keyword>
<name>ABCB4_DICDI</name>
<reference key="1">
    <citation type="journal article" date="2002" name="Eukaryot. Cell">
        <title>Evolutionary analyses of ABC transporters of Dictyostelium discoideum.</title>
        <authorList>
            <person name="Anjard C."/>
            <person name="Loomis W.F."/>
        </authorList>
    </citation>
    <scope>NUCLEOTIDE SEQUENCE [GENOMIC DNA]</scope>
    <scope>NOMENCLATURE</scope>
    <source>
        <strain>AX4</strain>
    </source>
</reference>
<reference key="2">
    <citation type="journal article" date="2005" name="Nature">
        <title>The genome of the social amoeba Dictyostelium discoideum.</title>
        <authorList>
            <person name="Eichinger L."/>
            <person name="Pachebat J.A."/>
            <person name="Gloeckner G."/>
            <person name="Rajandream M.A."/>
            <person name="Sucgang R."/>
            <person name="Berriman M."/>
            <person name="Song J."/>
            <person name="Olsen R."/>
            <person name="Szafranski K."/>
            <person name="Xu Q."/>
            <person name="Tunggal B."/>
            <person name="Kummerfeld S."/>
            <person name="Madera M."/>
            <person name="Konfortov B.A."/>
            <person name="Rivero F."/>
            <person name="Bankier A.T."/>
            <person name="Lehmann R."/>
            <person name="Hamlin N."/>
            <person name="Davies R."/>
            <person name="Gaudet P."/>
            <person name="Fey P."/>
            <person name="Pilcher K."/>
            <person name="Chen G."/>
            <person name="Saunders D."/>
            <person name="Sodergren E.J."/>
            <person name="Davis P."/>
            <person name="Kerhornou A."/>
            <person name="Nie X."/>
            <person name="Hall N."/>
            <person name="Anjard C."/>
            <person name="Hemphill L."/>
            <person name="Bason N."/>
            <person name="Farbrother P."/>
            <person name="Desany B."/>
            <person name="Just E."/>
            <person name="Morio T."/>
            <person name="Rost R."/>
            <person name="Churcher C.M."/>
            <person name="Cooper J."/>
            <person name="Haydock S."/>
            <person name="van Driessche N."/>
            <person name="Cronin A."/>
            <person name="Goodhead I."/>
            <person name="Muzny D.M."/>
            <person name="Mourier T."/>
            <person name="Pain A."/>
            <person name="Lu M."/>
            <person name="Harper D."/>
            <person name="Lindsay R."/>
            <person name="Hauser H."/>
            <person name="James K.D."/>
            <person name="Quiles M."/>
            <person name="Madan Babu M."/>
            <person name="Saito T."/>
            <person name="Buchrieser C."/>
            <person name="Wardroper A."/>
            <person name="Felder M."/>
            <person name="Thangavelu M."/>
            <person name="Johnson D."/>
            <person name="Knights A."/>
            <person name="Loulseged H."/>
            <person name="Mungall K.L."/>
            <person name="Oliver K."/>
            <person name="Price C."/>
            <person name="Quail M.A."/>
            <person name="Urushihara H."/>
            <person name="Hernandez J."/>
            <person name="Rabbinowitsch E."/>
            <person name="Steffen D."/>
            <person name="Sanders M."/>
            <person name="Ma J."/>
            <person name="Kohara Y."/>
            <person name="Sharp S."/>
            <person name="Simmonds M.N."/>
            <person name="Spiegler S."/>
            <person name="Tivey A."/>
            <person name="Sugano S."/>
            <person name="White B."/>
            <person name="Walker D."/>
            <person name="Woodward J.R."/>
            <person name="Winckler T."/>
            <person name="Tanaka Y."/>
            <person name="Shaulsky G."/>
            <person name="Schleicher M."/>
            <person name="Weinstock G.M."/>
            <person name="Rosenthal A."/>
            <person name="Cox E.C."/>
            <person name="Chisholm R.L."/>
            <person name="Gibbs R.A."/>
            <person name="Loomis W.F."/>
            <person name="Platzer M."/>
            <person name="Kay R.R."/>
            <person name="Williams J.G."/>
            <person name="Dear P.H."/>
            <person name="Noegel A.A."/>
            <person name="Barrell B.G."/>
            <person name="Kuspa A."/>
        </authorList>
    </citation>
    <scope>NUCLEOTIDE SEQUENCE [LARGE SCALE GENOMIC DNA]</scope>
    <source>
        <strain>AX4</strain>
    </source>
</reference>
<feature type="chain" id="PRO_0000391325" description="ABC transporter B family member 4">
    <location>
        <begin position="1"/>
        <end position="767"/>
    </location>
</feature>
<feature type="transmembrane region" description="Helical" evidence="2">
    <location>
        <begin position="208"/>
        <end position="228"/>
    </location>
</feature>
<feature type="transmembrane region" description="Helical" evidence="2">
    <location>
        <begin position="252"/>
        <end position="272"/>
    </location>
</feature>
<feature type="transmembrane region" description="Helical" evidence="2">
    <location>
        <begin position="324"/>
        <end position="344"/>
    </location>
</feature>
<feature type="transmembrane region" description="Helical" evidence="2">
    <location>
        <begin position="350"/>
        <end position="370"/>
    </location>
</feature>
<feature type="transmembrane region" description="Helical" evidence="2">
    <location>
        <begin position="429"/>
        <end position="449"/>
    </location>
</feature>
<feature type="domain" description="ABC transmembrane type-1" evidence="2">
    <location>
        <begin position="211"/>
        <end position="491"/>
    </location>
</feature>
<feature type="domain" description="ABC transporter" evidence="1">
    <location>
        <begin position="524"/>
        <end position="760"/>
    </location>
</feature>
<feature type="region of interest" description="Disordered" evidence="3">
    <location>
        <begin position="81"/>
        <end position="104"/>
    </location>
</feature>
<feature type="binding site" evidence="1">
    <location>
        <begin position="559"/>
        <end position="566"/>
    </location>
    <ligand>
        <name>ATP</name>
        <dbReference type="ChEBI" id="CHEBI:30616"/>
    </ligand>
</feature>
<feature type="sequence conflict" description="In Ref. 1; AAL74251." evidence="4" ref="1">
    <original>C</original>
    <variation>S</variation>
    <location>
        <position position="7"/>
    </location>
</feature>
<feature type="sequence conflict" description="In Ref. 1; AAL74251." evidence="4" ref="1">
    <original>V</original>
    <variation>G</variation>
    <location>
        <position position="272"/>
    </location>
</feature>
<feature type="sequence conflict" description="In Ref. 1; AAL74251." evidence="4" ref="1">
    <original>G</original>
    <variation>W</variation>
    <location>
        <position position="295"/>
    </location>
</feature>
<protein>
    <recommendedName>
        <fullName>ABC transporter B family member 4</fullName>
    </recommendedName>
    <alternativeName>
        <fullName>ABC transporter ABCB.4</fullName>
    </alternativeName>
</protein>
<gene>
    <name type="primary">abcB4</name>
    <name type="ORF">DDB_G0279915</name>
</gene>
<proteinExistence type="inferred from homology"/>
<sequence length="767" mass="85337">MNSLLRCCLIKPINIKNTTSFINKLNPKSIIQKSNNYNNINKNILNKFKDSSSNYFINSNKILEICNNNNNNNKYNVNKRNYSSSSNSGNNNNNNYNNKNNNNNNESFYKKFENSFEIKRIKDILFIIVGTFVIFKIYDNKIGIVFCENEIDKETILNDPYDKIPNEIIVELKDSAKDDNIIEESDEDDGIKKISSFKLFFKTIGNDIWLFGFGIITAFFSSWVGLQIPKVFGVLIDCTKNGDSLQGPAIQAIFILLAQAGLNFLYSTMISVACERYSARLRSTLFGAMLEQEIGFFDQNSTGDLINRLSSDVQLVRSALKHSVSLGVKSFGQIVGGVISLILISPKLSLGMMTILPTMVSVGTFYAGWLKSLSVRSQRAQAQSTIVAEEAIGNIRTVQAFSNQHYESERFIEKNQHSLALSTESGVQIGIFQGVTSLALNSVSLLVYWYGGTLVSRGEMTGGQLTSFIIHTMNMQSSFSQLSILFTQIMSAMGGMQRITELINRVPLINSNQGFKLRELKGEIKFINVDFKYPTRPHVHVLNGLNLTLKPGQVVALAGSSGGGKSTIAGLLERFYDISNGDITIDGYSIKQLNAKWLRSRIGIVSQEPSLFATTILENLRYGNPNATEDEIIEAAKLANAHQFISNFPKGYETIVGERGVQLSGGQKQRIAIARAILKNPQIIILDEATSALDSQSELLVQTALDNLMKGRTTLVIAHRLSTVQNADLIGVLSHGKIAEFGNHNELMNHKGLYYKLVQRQLSQQQQ</sequence>
<evidence type="ECO:0000255" key="1">
    <source>
        <dbReference type="PROSITE-ProRule" id="PRU00434"/>
    </source>
</evidence>
<evidence type="ECO:0000255" key="2">
    <source>
        <dbReference type="PROSITE-ProRule" id="PRU00441"/>
    </source>
</evidence>
<evidence type="ECO:0000256" key="3">
    <source>
        <dbReference type="SAM" id="MobiDB-lite"/>
    </source>
</evidence>
<evidence type="ECO:0000305" key="4"/>